<reference key="1">
    <citation type="journal article" date="2007" name="PLoS ONE">
        <title>Paradoxical DNA repair and peroxide resistance gene conservation in Bacillus pumilus SAFR-032.</title>
        <authorList>
            <person name="Gioia J."/>
            <person name="Yerrapragada S."/>
            <person name="Qin X."/>
            <person name="Jiang H."/>
            <person name="Igboeli O.C."/>
            <person name="Muzny D."/>
            <person name="Dugan-Rocha S."/>
            <person name="Ding Y."/>
            <person name="Hawes A."/>
            <person name="Liu W."/>
            <person name="Perez L."/>
            <person name="Kovar C."/>
            <person name="Dinh H."/>
            <person name="Lee S."/>
            <person name="Nazareth L."/>
            <person name="Blyth P."/>
            <person name="Holder M."/>
            <person name="Buhay C."/>
            <person name="Tirumalai M.R."/>
            <person name="Liu Y."/>
            <person name="Dasgupta I."/>
            <person name="Bokhetache L."/>
            <person name="Fujita M."/>
            <person name="Karouia F."/>
            <person name="Eswara Moorthy P."/>
            <person name="Siefert J."/>
            <person name="Uzman A."/>
            <person name="Buzumbo P."/>
            <person name="Verma A."/>
            <person name="Zwiya H."/>
            <person name="McWilliams B.D."/>
            <person name="Olowu A."/>
            <person name="Clinkenbeard K.D."/>
            <person name="Newcombe D."/>
            <person name="Golebiewski L."/>
            <person name="Petrosino J.F."/>
            <person name="Nicholson W.L."/>
            <person name="Fox G.E."/>
            <person name="Venkateswaran K."/>
            <person name="Highlander S.K."/>
            <person name="Weinstock G.M."/>
        </authorList>
    </citation>
    <scope>NUCLEOTIDE SEQUENCE [LARGE SCALE GENOMIC DNA]</scope>
    <source>
        <strain>SAFR-032</strain>
    </source>
</reference>
<organism>
    <name type="scientific">Bacillus pumilus (strain SAFR-032)</name>
    <dbReference type="NCBI Taxonomy" id="315750"/>
    <lineage>
        <taxon>Bacteria</taxon>
        <taxon>Bacillati</taxon>
        <taxon>Bacillota</taxon>
        <taxon>Bacilli</taxon>
        <taxon>Bacillales</taxon>
        <taxon>Bacillaceae</taxon>
        <taxon>Bacillus</taxon>
    </lineage>
</organism>
<sequence length="171" mass="19678">MKYGVVLFPSKKLQDIANSYRKRYDPNYALIPPHLTLRTPFELTDLEAAEVVSTLREYAKNASPITLRIKKFSSFAPVNNVIYMKVEPNEEIMALNERLYADPLEGTPEYAFVPHVTVAQKLSDDEHSDVLGTLKLRKIDHEETVDRFHLLYQLENGSWTVYETFILGEEG</sequence>
<comment type="similarity">
    <text evidence="1">Belongs to the 2H phosphoesterase superfamily. YjcG family.</text>
</comment>
<feature type="chain" id="PRO_1000068567" description="Putative phosphoesterase BPUM_1117">
    <location>
        <begin position="1"/>
        <end position="171"/>
    </location>
</feature>
<feature type="short sequence motif" description="HXTX 1" evidence="1">
    <location>
        <begin position="34"/>
        <end position="37"/>
    </location>
</feature>
<feature type="short sequence motif" description="HXTX 2" evidence="1">
    <location>
        <begin position="115"/>
        <end position="118"/>
    </location>
</feature>
<feature type="active site" description="Proton donor" evidence="1">
    <location>
        <position position="34"/>
    </location>
</feature>
<feature type="active site" description="Proton acceptor" evidence="1">
    <location>
        <position position="115"/>
    </location>
</feature>
<dbReference type="EC" id="3.1.-.-" evidence="1"/>
<dbReference type="EMBL" id="CP000813">
    <property type="protein sequence ID" value="ABV61801.1"/>
    <property type="molecule type" value="Genomic_DNA"/>
</dbReference>
<dbReference type="RefSeq" id="WP_012009608.1">
    <property type="nucleotide sequence ID" value="NZ_VEIS01000013.1"/>
</dbReference>
<dbReference type="SMR" id="A8FC34"/>
<dbReference type="STRING" id="315750.BPUM_1117"/>
<dbReference type="GeneID" id="5620380"/>
<dbReference type="KEGG" id="bpu:BPUM_1117"/>
<dbReference type="eggNOG" id="COG1514">
    <property type="taxonomic scope" value="Bacteria"/>
</dbReference>
<dbReference type="HOGENOM" id="CLU_132020_0_0_9"/>
<dbReference type="OrthoDB" id="1524661at2"/>
<dbReference type="Proteomes" id="UP000001355">
    <property type="component" value="Chromosome"/>
</dbReference>
<dbReference type="GO" id="GO:0016788">
    <property type="term" value="F:hydrolase activity, acting on ester bonds"/>
    <property type="evidence" value="ECO:0007669"/>
    <property type="project" value="UniProtKB-UniRule"/>
</dbReference>
<dbReference type="Gene3D" id="3.90.1140.10">
    <property type="entry name" value="Cyclic phosphodiesterase"/>
    <property type="match status" value="1"/>
</dbReference>
<dbReference type="HAMAP" id="MF_01444">
    <property type="entry name" value="2H_phosphoesterase_YjcG"/>
    <property type="match status" value="1"/>
</dbReference>
<dbReference type="InterPro" id="IPR050580">
    <property type="entry name" value="2H_phosphoesterase_YjcG-like"/>
</dbReference>
<dbReference type="InterPro" id="IPR009097">
    <property type="entry name" value="Cyclic_Pdiesterase"/>
</dbReference>
<dbReference type="InterPro" id="IPR022932">
    <property type="entry name" value="YjcG"/>
</dbReference>
<dbReference type="NCBIfam" id="NF010223">
    <property type="entry name" value="PRK13679.1"/>
    <property type="match status" value="1"/>
</dbReference>
<dbReference type="PANTHER" id="PTHR40037:SF1">
    <property type="entry name" value="PHOSPHOESTERASE SAOUHSC_00951-RELATED"/>
    <property type="match status" value="1"/>
</dbReference>
<dbReference type="PANTHER" id="PTHR40037">
    <property type="entry name" value="PHOSPHOESTERASE YJCG-RELATED"/>
    <property type="match status" value="1"/>
</dbReference>
<dbReference type="Pfam" id="PF13563">
    <property type="entry name" value="2_5_RNA_ligase2"/>
    <property type="match status" value="1"/>
</dbReference>
<dbReference type="SUPFAM" id="SSF55144">
    <property type="entry name" value="LigT-like"/>
    <property type="match status" value="1"/>
</dbReference>
<name>Y1117_BACP2</name>
<accession>A8FC34</accession>
<protein>
    <recommendedName>
        <fullName evidence="1">Putative phosphoesterase BPUM_1117</fullName>
        <ecNumber evidence="1">3.1.-.-</ecNumber>
    </recommendedName>
</protein>
<proteinExistence type="inferred from homology"/>
<keyword id="KW-0378">Hydrolase</keyword>
<gene>
    <name type="ordered locus">BPUM_1117</name>
</gene>
<evidence type="ECO:0000255" key="1">
    <source>
        <dbReference type="HAMAP-Rule" id="MF_01444"/>
    </source>
</evidence>